<sequence length="350" mass="37569">MSLEAIKYKKGRLEILNQLLLPHESTYEVVSDTEDGWKAIREMKVRGAPAIAIVGALSLAAEIYSKPFASSEELAEFVKQKLQYLNTARPTAVNMTNAVIELTAFVADLTKCSPKDMKQKLLSKIEGMLSEDIAQNKAIGKFGAESILGAVGGPVRMLTHCNTGSLATAGYGTGLGVIRSIHEMKQLEHVYCTETRPYNQGSRLTAYELVYEKIPSTLIADSAVSMAMKTKKISAVVVGADRIACNGDTANKIGTYQLALAAKHHEIPFYVAAPVTSIDFSLVNGDAIVIEERSPLELTSVKGIPVAASGIGVWNPAFDVTPAGLITGIVTEHGTFSPQEMKDKLLALKG</sequence>
<protein>
    <recommendedName>
        <fullName evidence="1">Methylthioribose-1-phosphate isomerase</fullName>
        <shortName evidence="1">M1Pi</shortName>
        <shortName evidence="1">MTR-1-P isomerase</shortName>
        <ecNumber evidence="1">5.3.1.23</ecNumber>
    </recommendedName>
    <alternativeName>
        <fullName evidence="1">S-methyl-5-thioribose-1-phosphate isomerase</fullName>
    </alternativeName>
    <alternativeName>
        <fullName evidence="1">Translation initiation factor eIF-2B subunit alpha/beta/delta-like protein</fullName>
    </alternativeName>
</protein>
<feature type="chain" id="PRO_0000401987" description="Methylthioribose-1-phosphate isomerase">
    <location>
        <begin position="1"/>
        <end position="350"/>
    </location>
</feature>
<feature type="active site" description="Proton donor" evidence="1">
    <location>
        <position position="241"/>
    </location>
</feature>
<feature type="site" description="Transition state stabilizer" evidence="1">
    <location>
        <position position="161"/>
    </location>
</feature>
<organism>
    <name type="scientific">Nematostella vectensis</name>
    <name type="common">Starlet sea anemone</name>
    <dbReference type="NCBI Taxonomy" id="45351"/>
    <lineage>
        <taxon>Eukaryota</taxon>
        <taxon>Metazoa</taxon>
        <taxon>Cnidaria</taxon>
        <taxon>Anthozoa</taxon>
        <taxon>Hexacorallia</taxon>
        <taxon>Actiniaria</taxon>
        <taxon>Edwardsiidae</taxon>
        <taxon>Nematostella</taxon>
    </lineage>
</organism>
<gene>
    <name type="ORF">v1g237765</name>
</gene>
<evidence type="ECO:0000255" key="1">
    <source>
        <dbReference type="HAMAP-Rule" id="MF_03119"/>
    </source>
</evidence>
<name>MTNA_NEMVE</name>
<proteinExistence type="inferred from homology"/>
<dbReference type="EC" id="5.3.1.23" evidence="1"/>
<dbReference type="EMBL" id="DS469507">
    <property type="protein sequence ID" value="EDO49882.1"/>
    <property type="molecule type" value="Genomic_DNA"/>
</dbReference>
<dbReference type="SMR" id="A7RF00"/>
<dbReference type="STRING" id="45351.A7RF00"/>
<dbReference type="EnsemblMetazoa" id="EDO49882">
    <property type="protein sequence ID" value="EDO49882"/>
    <property type="gene ID" value="NEMVEDRAFT_v1g237765"/>
</dbReference>
<dbReference type="KEGG" id="nve:5522310"/>
<dbReference type="eggNOG" id="KOG1468">
    <property type="taxonomic scope" value="Eukaryota"/>
</dbReference>
<dbReference type="HOGENOM" id="CLU_016218_1_3_1"/>
<dbReference type="InParanoid" id="A7RF00"/>
<dbReference type="OMA" id="CETRPLN"/>
<dbReference type="OrthoDB" id="2461at2759"/>
<dbReference type="PhylomeDB" id="A7RF00"/>
<dbReference type="UniPathway" id="UPA00904">
    <property type="reaction ID" value="UER00874"/>
</dbReference>
<dbReference type="Proteomes" id="UP000001593">
    <property type="component" value="Unassembled WGS sequence"/>
</dbReference>
<dbReference type="GO" id="GO:0005737">
    <property type="term" value="C:cytoplasm"/>
    <property type="evidence" value="ECO:0007669"/>
    <property type="project" value="UniProtKB-SubCell"/>
</dbReference>
<dbReference type="GO" id="GO:0005634">
    <property type="term" value="C:nucleus"/>
    <property type="evidence" value="ECO:0007669"/>
    <property type="project" value="UniProtKB-SubCell"/>
</dbReference>
<dbReference type="GO" id="GO:0046523">
    <property type="term" value="F:S-methyl-5-thioribose-1-phosphate isomerase activity"/>
    <property type="evidence" value="ECO:0000318"/>
    <property type="project" value="GO_Central"/>
</dbReference>
<dbReference type="GO" id="GO:0019509">
    <property type="term" value="P:L-methionine salvage from methylthioadenosine"/>
    <property type="evidence" value="ECO:0000318"/>
    <property type="project" value="GO_Central"/>
</dbReference>
<dbReference type="FunFam" id="1.20.120.420:FF:000003">
    <property type="entry name" value="Methylthioribose-1-phosphate isomerase"/>
    <property type="match status" value="1"/>
</dbReference>
<dbReference type="FunFam" id="3.40.50.10470:FF:000003">
    <property type="entry name" value="Methylthioribose-1-phosphate isomerase"/>
    <property type="match status" value="1"/>
</dbReference>
<dbReference type="Gene3D" id="1.20.120.420">
    <property type="entry name" value="translation initiation factor eif-2b, domain 1"/>
    <property type="match status" value="1"/>
</dbReference>
<dbReference type="Gene3D" id="3.40.50.10470">
    <property type="entry name" value="Translation initiation factor eif-2b, domain 2"/>
    <property type="match status" value="1"/>
</dbReference>
<dbReference type="HAMAP" id="MF_01678">
    <property type="entry name" value="Salvage_MtnA"/>
    <property type="match status" value="1"/>
</dbReference>
<dbReference type="InterPro" id="IPR000649">
    <property type="entry name" value="IF-2B-related"/>
</dbReference>
<dbReference type="InterPro" id="IPR005251">
    <property type="entry name" value="IF-M1Pi"/>
</dbReference>
<dbReference type="InterPro" id="IPR042529">
    <property type="entry name" value="IF_2B-like_C"/>
</dbReference>
<dbReference type="InterPro" id="IPR011559">
    <property type="entry name" value="Initiation_fac_2B_a/b/d"/>
</dbReference>
<dbReference type="InterPro" id="IPR027363">
    <property type="entry name" value="M1Pi_N"/>
</dbReference>
<dbReference type="InterPro" id="IPR037171">
    <property type="entry name" value="NagB/RpiA_transferase-like"/>
</dbReference>
<dbReference type="NCBIfam" id="TIGR00524">
    <property type="entry name" value="eIF-2B_rel"/>
    <property type="match status" value="1"/>
</dbReference>
<dbReference type="NCBIfam" id="NF004326">
    <property type="entry name" value="PRK05720.1"/>
    <property type="match status" value="1"/>
</dbReference>
<dbReference type="NCBIfam" id="TIGR00512">
    <property type="entry name" value="salvage_mtnA"/>
    <property type="match status" value="1"/>
</dbReference>
<dbReference type="PANTHER" id="PTHR43475">
    <property type="entry name" value="METHYLTHIORIBOSE-1-PHOSPHATE ISOMERASE"/>
    <property type="match status" value="1"/>
</dbReference>
<dbReference type="PANTHER" id="PTHR43475:SF1">
    <property type="entry name" value="METHYLTHIORIBOSE-1-PHOSPHATE ISOMERASE"/>
    <property type="match status" value="1"/>
</dbReference>
<dbReference type="Pfam" id="PF01008">
    <property type="entry name" value="IF-2B"/>
    <property type="match status" value="1"/>
</dbReference>
<dbReference type="SUPFAM" id="SSF100950">
    <property type="entry name" value="NagB/RpiA/CoA transferase-like"/>
    <property type="match status" value="1"/>
</dbReference>
<comment type="function">
    <text evidence="1">Catalyzes the interconversion of methylthioribose-1-phosphate (MTR-1-P) into methylthioribulose-1-phosphate (MTRu-1-P).</text>
</comment>
<comment type="catalytic activity">
    <reaction evidence="1">
        <text>5-(methylsulfanyl)-alpha-D-ribose 1-phosphate = 5-(methylsulfanyl)-D-ribulose 1-phosphate</text>
        <dbReference type="Rhea" id="RHEA:19989"/>
        <dbReference type="ChEBI" id="CHEBI:58533"/>
        <dbReference type="ChEBI" id="CHEBI:58548"/>
        <dbReference type="EC" id="5.3.1.23"/>
    </reaction>
</comment>
<comment type="pathway">
    <text evidence="1">Amino-acid biosynthesis; L-methionine biosynthesis via salvage pathway; L-methionine from S-methyl-5-thio-alpha-D-ribose 1-phosphate: step 1/6.</text>
</comment>
<comment type="subcellular location">
    <subcellularLocation>
        <location evidence="1">Cytoplasm</location>
    </subcellularLocation>
    <subcellularLocation>
        <location evidence="1">Nucleus</location>
    </subcellularLocation>
</comment>
<comment type="similarity">
    <text evidence="1">Belongs to the eIF-2B alpha/beta/delta subunits family. MtnA subfamily.</text>
</comment>
<accession>A7RF00</accession>
<keyword id="KW-0028">Amino-acid biosynthesis</keyword>
<keyword id="KW-0963">Cytoplasm</keyword>
<keyword id="KW-0413">Isomerase</keyword>
<keyword id="KW-0486">Methionine biosynthesis</keyword>
<keyword id="KW-0539">Nucleus</keyword>
<keyword id="KW-1185">Reference proteome</keyword>
<reference key="1">
    <citation type="journal article" date="2007" name="Science">
        <title>Sea anemone genome reveals ancestral eumetazoan gene repertoire and genomic organization.</title>
        <authorList>
            <person name="Putnam N.H."/>
            <person name="Srivastava M."/>
            <person name="Hellsten U."/>
            <person name="Dirks B."/>
            <person name="Chapman J."/>
            <person name="Salamov A."/>
            <person name="Terry A."/>
            <person name="Shapiro H."/>
            <person name="Lindquist E."/>
            <person name="Kapitonov V.V."/>
            <person name="Jurka J."/>
            <person name="Genikhovich G."/>
            <person name="Grigoriev I.V."/>
            <person name="Lucas S.M."/>
            <person name="Steele R.E."/>
            <person name="Finnerty J.R."/>
            <person name="Technau U."/>
            <person name="Martindale M.Q."/>
            <person name="Rokhsar D.S."/>
        </authorList>
    </citation>
    <scope>NUCLEOTIDE SEQUENCE [LARGE SCALE GENOMIC DNA]</scope>
    <source>
        <strain>CH2 X CH6</strain>
    </source>
</reference>